<proteinExistence type="inferred from homology"/>
<name>METK_PROM3</name>
<reference key="1">
    <citation type="journal article" date="2007" name="PLoS Genet.">
        <title>Patterns and implications of gene gain and loss in the evolution of Prochlorococcus.</title>
        <authorList>
            <person name="Kettler G.C."/>
            <person name="Martiny A.C."/>
            <person name="Huang K."/>
            <person name="Zucker J."/>
            <person name="Coleman M.L."/>
            <person name="Rodrigue S."/>
            <person name="Chen F."/>
            <person name="Lapidus A."/>
            <person name="Ferriera S."/>
            <person name="Johnson J."/>
            <person name="Steglich C."/>
            <person name="Church G.M."/>
            <person name="Richardson P."/>
            <person name="Chisholm S.W."/>
        </authorList>
    </citation>
    <scope>NUCLEOTIDE SEQUENCE [LARGE SCALE GENOMIC DNA]</scope>
    <source>
        <strain>MIT 9303</strain>
    </source>
</reference>
<comment type="function">
    <text evidence="1">Catalyzes the formation of S-adenosylmethionine (AdoMet) from methionine and ATP. The overall synthetic reaction is composed of two sequential steps, AdoMet formation and the subsequent tripolyphosphate hydrolysis which occurs prior to release of AdoMet from the enzyme.</text>
</comment>
<comment type="catalytic activity">
    <reaction evidence="1">
        <text>L-methionine + ATP + H2O = S-adenosyl-L-methionine + phosphate + diphosphate</text>
        <dbReference type="Rhea" id="RHEA:21080"/>
        <dbReference type="ChEBI" id="CHEBI:15377"/>
        <dbReference type="ChEBI" id="CHEBI:30616"/>
        <dbReference type="ChEBI" id="CHEBI:33019"/>
        <dbReference type="ChEBI" id="CHEBI:43474"/>
        <dbReference type="ChEBI" id="CHEBI:57844"/>
        <dbReference type="ChEBI" id="CHEBI:59789"/>
        <dbReference type="EC" id="2.5.1.6"/>
    </reaction>
</comment>
<comment type="cofactor">
    <cofactor evidence="1">
        <name>Mg(2+)</name>
        <dbReference type="ChEBI" id="CHEBI:18420"/>
    </cofactor>
    <text evidence="1">Binds 2 divalent ions per subunit.</text>
</comment>
<comment type="cofactor">
    <cofactor evidence="1">
        <name>K(+)</name>
        <dbReference type="ChEBI" id="CHEBI:29103"/>
    </cofactor>
    <text evidence="1">Binds 1 potassium ion per subunit.</text>
</comment>
<comment type="pathway">
    <text evidence="1">Amino-acid biosynthesis; S-adenosyl-L-methionine biosynthesis; S-adenosyl-L-methionine from L-methionine: step 1/1.</text>
</comment>
<comment type="subunit">
    <text evidence="1">Homotetramer; dimer of dimers.</text>
</comment>
<comment type="subcellular location">
    <subcellularLocation>
        <location evidence="1">Cytoplasm</location>
    </subcellularLocation>
</comment>
<comment type="similarity">
    <text evidence="1">Belongs to the AdoMet synthase family.</text>
</comment>
<keyword id="KW-0067">ATP-binding</keyword>
<keyword id="KW-0963">Cytoplasm</keyword>
<keyword id="KW-0460">Magnesium</keyword>
<keyword id="KW-0479">Metal-binding</keyword>
<keyword id="KW-0547">Nucleotide-binding</keyword>
<keyword id="KW-0554">One-carbon metabolism</keyword>
<keyword id="KW-0630">Potassium</keyword>
<keyword id="KW-0808">Transferase</keyword>
<organism>
    <name type="scientific">Prochlorococcus marinus (strain MIT 9303)</name>
    <dbReference type="NCBI Taxonomy" id="59922"/>
    <lineage>
        <taxon>Bacteria</taxon>
        <taxon>Bacillati</taxon>
        <taxon>Cyanobacteriota</taxon>
        <taxon>Cyanophyceae</taxon>
        <taxon>Synechococcales</taxon>
        <taxon>Prochlorococcaceae</taxon>
        <taxon>Prochlorococcus</taxon>
    </lineage>
</organism>
<dbReference type="EC" id="2.5.1.6" evidence="1"/>
<dbReference type="EMBL" id="CP000554">
    <property type="protein sequence ID" value="ABM78953.1"/>
    <property type="molecule type" value="Genomic_DNA"/>
</dbReference>
<dbReference type="RefSeq" id="WP_011826821.1">
    <property type="nucleotide sequence ID" value="NC_008820.1"/>
</dbReference>
<dbReference type="SMR" id="A2CBU3"/>
<dbReference type="STRING" id="59922.P9303_22181"/>
<dbReference type="KEGG" id="pmf:P9303_22181"/>
<dbReference type="HOGENOM" id="CLU_041802_1_1_3"/>
<dbReference type="BioCyc" id="PMAR59922:G1G80-1941-MONOMER"/>
<dbReference type="UniPathway" id="UPA00315">
    <property type="reaction ID" value="UER00080"/>
</dbReference>
<dbReference type="Proteomes" id="UP000002274">
    <property type="component" value="Chromosome"/>
</dbReference>
<dbReference type="GO" id="GO:0005737">
    <property type="term" value="C:cytoplasm"/>
    <property type="evidence" value="ECO:0007669"/>
    <property type="project" value="UniProtKB-SubCell"/>
</dbReference>
<dbReference type="GO" id="GO:0005524">
    <property type="term" value="F:ATP binding"/>
    <property type="evidence" value="ECO:0007669"/>
    <property type="project" value="UniProtKB-UniRule"/>
</dbReference>
<dbReference type="GO" id="GO:0000287">
    <property type="term" value="F:magnesium ion binding"/>
    <property type="evidence" value="ECO:0007669"/>
    <property type="project" value="UniProtKB-UniRule"/>
</dbReference>
<dbReference type="GO" id="GO:0004478">
    <property type="term" value="F:methionine adenosyltransferase activity"/>
    <property type="evidence" value="ECO:0007669"/>
    <property type="project" value="UniProtKB-UniRule"/>
</dbReference>
<dbReference type="GO" id="GO:0006730">
    <property type="term" value="P:one-carbon metabolic process"/>
    <property type="evidence" value="ECO:0007669"/>
    <property type="project" value="UniProtKB-KW"/>
</dbReference>
<dbReference type="GO" id="GO:0006556">
    <property type="term" value="P:S-adenosylmethionine biosynthetic process"/>
    <property type="evidence" value="ECO:0007669"/>
    <property type="project" value="UniProtKB-UniRule"/>
</dbReference>
<dbReference type="CDD" id="cd18079">
    <property type="entry name" value="S-AdoMet_synt"/>
    <property type="match status" value="1"/>
</dbReference>
<dbReference type="FunFam" id="3.30.300.10:FF:000003">
    <property type="entry name" value="S-adenosylmethionine synthase"/>
    <property type="match status" value="1"/>
</dbReference>
<dbReference type="Gene3D" id="3.30.300.10">
    <property type="match status" value="3"/>
</dbReference>
<dbReference type="HAMAP" id="MF_00086">
    <property type="entry name" value="S_AdoMet_synth1"/>
    <property type="match status" value="1"/>
</dbReference>
<dbReference type="InterPro" id="IPR022631">
    <property type="entry name" value="ADOMET_SYNTHASE_CS"/>
</dbReference>
<dbReference type="InterPro" id="IPR022630">
    <property type="entry name" value="S-AdoMet_synt_C"/>
</dbReference>
<dbReference type="InterPro" id="IPR022629">
    <property type="entry name" value="S-AdoMet_synt_central"/>
</dbReference>
<dbReference type="InterPro" id="IPR022628">
    <property type="entry name" value="S-AdoMet_synt_N"/>
</dbReference>
<dbReference type="InterPro" id="IPR002133">
    <property type="entry name" value="S-AdoMet_synthetase"/>
</dbReference>
<dbReference type="InterPro" id="IPR022636">
    <property type="entry name" value="S-AdoMet_synthetase_sfam"/>
</dbReference>
<dbReference type="NCBIfam" id="TIGR01034">
    <property type="entry name" value="metK"/>
    <property type="match status" value="1"/>
</dbReference>
<dbReference type="PANTHER" id="PTHR11964">
    <property type="entry name" value="S-ADENOSYLMETHIONINE SYNTHETASE"/>
    <property type="match status" value="1"/>
</dbReference>
<dbReference type="Pfam" id="PF02773">
    <property type="entry name" value="S-AdoMet_synt_C"/>
    <property type="match status" value="1"/>
</dbReference>
<dbReference type="Pfam" id="PF02772">
    <property type="entry name" value="S-AdoMet_synt_M"/>
    <property type="match status" value="1"/>
</dbReference>
<dbReference type="Pfam" id="PF00438">
    <property type="entry name" value="S-AdoMet_synt_N"/>
    <property type="match status" value="1"/>
</dbReference>
<dbReference type="PIRSF" id="PIRSF000497">
    <property type="entry name" value="MAT"/>
    <property type="match status" value="1"/>
</dbReference>
<dbReference type="SUPFAM" id="SSF55973">
    <property type="entry name" value="S-adenosylmethionine synthetase"/>
    <property type="match status" value="3"/>
</dbReference>
<dbReference type="PROSITE" id="PS00376">
    <property type="entry name" value="ADOMET_SYNTHASE_1"/>
    <property type="match status" value="1"/>
</dbReference>
<dbReference type="PROSITE" id="PS00377">
    <property type="entry name" value="ADOMET_SYNTHASE_2"/>
    <property type="match status" value="1"/>
</dbReference>
<sequence length="419" mass="44959">MSRYVFTSESVTEGHPDKICDQVSDAVLDALLAQDPSSRVACETVVNTGLCLITGEVTSNSQVDFIHLVRNVIREIGYSGARAGGFDATSCAVLVALDQQSPDIAQGVNEADDHSGDPLDKVGAGDQGIMFGYACDDTPELMPLPISLAHRLARQLAAVRHDGSLSYLLPDGKTQVSVVYENDRPVAIDTILISTQHTSEVEGISDENGIRERITQDLWTHVVEPATADLPLKPNREATRFLVNPTGKFVVGGPQGDAGLTGRKIIVDTYGGYARHGGGAFSGKDPTKVDRSAAYAARFVAKCLVAAGLAQRAEVQLSYAIGVAKPVSILVESFGTGKVTNDELTALVQDHFDLRPGAIIEQFKLRQLPQQRGGRFYQDTAAYGHFGRPDLNLPWEDVTDKASTLLQAEAQQQKQGSSL</sequence>
<protein>
    <recommendedName>
        <fullName evidence="1">S-adenosylmethionine synthase</fullName>
        <shortName evidence="1">AdoMet synthase</shortName>
        <ecNumber evidence="1">2.5.1.6</ecNumber>
    </recommendedName>
    <alternativeName>
        <fullName evidence="1">MAT</fullName>
    </alternativeName>
    <alternativeName>
        <fullName evidence="1">Methionine adenosyltransferase</fullName>
    </alternativeName>
</protein>
<gene>
    <name evidence="1" type="primary">metK</name>
    <name type="ordered locus">P9303_22181</name>
</gene>
<evidence type="ECO:0000255" key="1">
    <source>
        <dbReference type="HAMAP-Rule" id="MF_00086"/>
    </source>
</evidence>
<accession>A2CBU3</accession>
<feature type="chain" id="PRO_0000302960" description="S-adenosylmethionine synthase">
    <location>
        <begin position="1"/>
        <end position="419"/>
    </location>
</feature>
<feature type="region of interest" description="Flexible loop" evidence="1">
    <location>
        <begin position="100"/>
        <end position="110"/>
    </location>
</feature>
<feature type="binding site" description="in other chain" evidence="1">
    <location>
        <position position="15"/>
    </location>
    <ligand>
        <name>ATP</name>
        <dbReference type="ChEBI" id="CHEBI:30616"/>
        <note>ligand shared between two neighboring subunits</note>
    </ligand>
</feature>
<feature type="binding site" evidence="1">
    <location>
        <position position="17"/>
    </location>
    <ligand>
        <name>Mg(2+)</name>
        <dbReference type="ChEBI" id="CHEBI:18420"/>
    </ligand>
</feature>
<feature type="binding site" evidence="1">
    <location>
        <position position="43"/>
    </location>
    <ligand>
        <name>K(+)</name>
        <dbReference type="ChEBI" id="CHEBI:29103"/>
    </ligand>
</feature>
<feature type="binding site" description="in other chain" evidence="1">
    <location>
        <position position="56"/>
    </location>
    <ligand>
        <name>L-methionine</name>
        <dbReference type="ChEBI" id="CHEBI:57844"/>
        <note>ligand shared between two neighboring subunits</note>
    </ligand>
</feature>
<feature type="binding site" description="in other chain" evidence="1">
    <location>
        <position position="100"/>
    </location>
    <ligand>
        <name>L-methionine</name>
        <dbReference type="ChEBI" id="CHEBI:57844"/>
        <note>ligand shared between two neighboring subunits</note>
    </ligand>
</feature>
<feature type="binding site" description="in other chain" evidence="1">
    <location>
        <begin position="171"/>
        <end position="173"/>
    </location>
    <ligand>
        <name>ATP</name>
        <dbReference type="ChEBI" id="CHEBI:30616"/>
        <note>ligand shared between two neighboring subunits</note>
    </ligand>
</feature>
<feature type="binding site" description="in other chain" evidence="1">
    <location>
        <begin position="248"/>
        <end position="249"/>
    </location>
    <ligand>
        <name>ATP</name>
        <dbReference type="ChEBI" id="CHEBI:30616"/>
        <note>ligand shared between two neighboring subunits</note>
    </ligand>
</feature>
<feature type="binding site" evidence="1">
    <location>
        <position position="257"/>
    </location>
    <ligand>
        <name>ATP</name>
        <dbReference type="ChEBI" id="CHEBI:30616"/>
        <note>ligand shared between two neighboring subunits</note>
    </ligand>
</feature>
<feature type="binding site" evidence="1">
    <location>
        <position position="257"/>
    </location>
    <ligand>
        <name>L-methionine</name>
        <dbReference type="ChEBI" id="CHEBI:57844"/>
        <note>ligand shared between two neighboring subunits</note>
    </ligand>
</feature>
<feature type="binding site" description="in other chain" evidence="1">
    <location>
        <begin position="263"/>
        <end position="264"/>
    </location>
    <ligand>
        <name>ATP</name>
        <dbReference type="ChEBI" id="CHEBI:30616"/>
        <note>ligand shared between two neighboring subunits</note>
    </ligand>
</feature>
<feature type="binding site" evidence="1">
    <location>
        <position position="280"/>
    </location>
    <ligand>
        <name>ATP</name>
        <dbReference type="ChEBI" id="CHEBI:30616"/>
        <note>ligand shared between two neighboring subunits</note>
    </ligand>
</feature>
<feature type="binding site" evidence="1">
    <location>
        <position position="284"/>
    </location>
    <ligand>
        <name>ATP</name>
        <dbReference type="ChEBI" id="CHEBI:30616"/>
        <note>ligand shared between two neighboring subunits</note>
    </ligand>
</feature>
<feature type="binding site" description="in other chain" evidence="1">
    <location>
        <position position="288"/>
    </location>
    <ligand>
        <name>L-methionine</name>
        <dbReference type="ChEBI" id="CHEBI:57844"/>
        <note>ligand shared between two neighboring subunits</note>
    </ligand>
</feature>